<sequence>MLYLASRSPRRQELLQRLDVPFQTLQLDVPELRAADESPDQYVQRVALEKAHAGLALVQAADPDAIVLGSDTEVVLGERVFGKPVDVDDAIAMLRELSGRTHQVLTAVVLVCAQRAPARALVVSEVAFDTLDDAQIAAYAACGEPMGKAGAYAIQGRAERFIRHLSGSYSGVMGLPLYHTSQLLTAFGAH</sequence>
<protein>
    <recommendedName>
        <fullName evidence="1">dTTP/UTP pyrophosphatase</fullName>
        <shortName evidence="1">dTTPase/UTPase</shortName>
        <ecNumber evidence="1">3.6.1.9</ecNumber>
    </recommendedName>
    <alternativeName>
        <fullName evidence="1">Nucleoside triphosphate pyrophosphatase</fullName>
    </alternativeName>
    <alternativeName>
        <fullName evidence="1">Nucleotide pyrophosphatase</fullName>
        <shortName evidence="1">Nucleotide PPase</shortName>
    </alternativeName>
</protein>
<name>NTPPA_XANAC</name>
<proteinExistence type="inferred from homology"/>
<accession>Q8PIX4</accession>
<dbReference type="EC" id="3.6.1.9" evidence="1"/>
<dbReference type="EMBL" id="AE008923">
    <property type="protein sequence ID" value="AAM37616.1"/>
    <property type="molecule type" value="Genomic_DNA"/>
</dbReference>
<dbReference type="RefSeq" id="WP_011051815.1">
    <property type="nucleotide sequence ID" value="NC_003919.1"/>
</dbReference>
<dbReference type="SMR" id="Q8PIX4"/>
<dbReference type="KEGG" id="xac:XAC2771"/>
<dbReference type="eggNOG" id="COG0424">
    <property type="taxonomic scope" value="Bacteria"/>
</dbReference>
<dbReference type="HOGENOM" id="CLU_040416_2_1_6"/>
<dbReference type="Proteomes" id="UP000000576">
    <property type="component" value="Chromosome"/>
</dbReference>
<dbReference type="GO" id="GO:0005737">
    <property type="term" value="C:cytoplasm"/>
    <property type="evidence" value="ECO:0007669"/>
    <property type="project" value="UniProtKB-SubCell"/>
</dbReference>
<dbReference type="GO" id="GO:0036218">
    <property type="term" value="F:dTTP diphosphatase activity"/>
    <property type="evidence" value="ECO:0007669"/>
    <property type="project" value="RHEA"/>
</dbReference>
<dbReference type="GO" id="GO:0036221">
    <property type="term" value="F:UTP diphosphatase activity"/>
    <property type="evidence" value="ECO:0007669"/>
    <property type="project" value="RHEA"/>
</dbReference>
<dbReference type="GO" id="GO:0009117">
    <property type="term" value="P:nucleotide metabolic process"/>
    <property type="evidence" value="ECO:0007669"/>
    <property type="project" value="UniProtKB-KW"/>
</dbReference>
<dbReference type="CDD" id="cd00555">
    <property type="entry name" value="Maf"/>
    <property type="match status" value="1"/>
</dbReference>
<dbReference type="Gene3D" id="3.90.950.10">
    <property type="match status" value="1"/>
</dbReference>
<dbReference type="HAMAP" id="MF_00528">
    <property type="entry name" value="Maf"/>
    <property type="match status" value="1"/>
</dbReference>
<dbReference type="InterPro" id="IPR029001">
    <property type="entry name" value="ITPase-like_fam"/>
</dbReference>
<dbReference type="InterPro" id="IPR003697">
    <property type="entry name" value="Maf-like"/>
</dbReference>
<dbReference type="NCBIfam" id="TIGR00172">
    <property type="entry name" value="maf"/>
    <property type="match status" value="1"/>
</dbReference>
<dbReference type="NCBIfam" id="NF003403">
    <property type="entry name" value="PRK04694.1"/>
    <property type="match status" value="1"/>
</dbReference>
<dbReference type="PANTHER" id="PTHR43213">
    <property type="entry name" value="BIFUNCTIONAL DTTP/UTP PYROPHOSPHATASE/METHYLTRANSFERASE PROTEIN-RELATED"/>
    <property type="match status" value="1"/>
</dbReference>
<dbReference type="PANTHER" id="PTHR43213:SF5">
    <property type="entry name" value="BIFUNCTIONAL DTTP_UTP PYROPHOSPHATASE_METHYLTRANSFERASE PROTEIN-RELATED"/>
    <property type="match status" value="1"/>
</dbReference>
<dbReference type="Pfam" id="PF02545">
    <property type="entry name" value="Maf"/>
    <property type="match status" value="1"/>
</dbReference>
<dbReference type="PIRSF" id="PIRSF006305">
    <property type="entry name" value="Maf"/>
    <property type="match status" value="1"/>
</dbReference>
<dbReference type="SUPFAM" id="SSF52972">
    <property type="entry name" value="ITPase-like"/>
    <property type="match status" value="1"/>
</dbReference>
<comment type="function">
    <text evidence="1">Nucleoside triphosphate pyrophosphatase that hydrolyzes dTTP and UTP. May have a dual role in cell division arrest and in preventing the incorporation of modified nucleotides into cellular nucleic acids.</text>
</comment>
<comment type="catalytic activity">
    <reaction evidence="1">
        <text>dTTP + H2O = dTMP + diphosphate + H(+)</text>
        <dbReference type="Rhea" id="RHEA:28534"/>
        <dbReference type="ChEBI" id="CHEBI:15377"/>
        <dbReference type="ChEBI" id="CHEBI:15378"/>
        <dbReference type="ChEBI" id="CHEBI:33019"/>
        <dbReference type="ChEBI" id="CHEBI:37568"/>
        <dbReference type="ChEBI" id="CHEBI:63528"/>
        <dbReference type="EC" id="3.6.1.9"/>
    </reaction>
</comment>
<comment type="catalytic activity">
    <reaction evidence="1">
        <text>UTP + H2O = UMP + diphosphate + H(+)</text>
        <dbReference type="Rhea" id="RHEA:29395"/>
        <dbReference type="ChEBI" id="CHEBI:15377"/>
        <dbReference type="ChEBI" id="CHEBI:15378"/>
        <dbReference type="ChEBI" id="CHEBI:33019"/>
        <dbReference type="ChEBI" id="CHEBI:46398"/>
        <dbReference type="ChEBI" id="CHEBI:57865"/>
        <dbReference type="EC" id="3.6.1.9"/>
    </reaction>
</comment>
<comment type="cofactor">
    <cofactor evidence="1">
        <name>a divalent metal cation</name>
        <dbReference type="ChEBI" id="CHEBI:60240"/>
    </cofactor>
</comment>
<comment type="subcellular location">
    <subcellularLocation>
        <location evidence="1">Cytoplasm</location>
    </subcellularLocation>
</comment>
<comment type="similarity">
    <text evidence="1">Belongs to the Maf family. YhdE subfamily.</text>
</comment>
<organism>
    <name type="scientific">Xanthomonas axonopodis pv. citri (strain 306)</name>
    <dbReference type="NCBI Taxonomy" id="190486"/>
    <lineage>
        <taxon>Bacteria</taxon>
        <taxon>Pseudomonadati</taxon>
        <taxon>Pseudomonadota</taxon>
        <taxon>Gammaproteobacteria</taxon>
        <taxon>Lysobacterales</taxon>
        <taxon>Lysobacteraceae</taxon>
        <taxon>Xanthomonas</taxon>
    </lineage>
</organism>
<feature type="chain" id="PRO_0000123076" description="dTTP/UTP pyrophosphatase">
    <location>
        <begin position="1"/>
        <end position="190"/>
    </location>
</feature>
<feature type="active site" description="Proton acceptor" evidence="1">
    <location>
        <position position="71"/>
    </location>
</feature>
<feature type="site" description="Important for substrate specificity" evidence="1">
    <location>
        <position position="10"/>
    </location>
</feature>
<feature type="site" description="Important for substrate specificity" evidence="1">
    <location>
        <position position="72"/>
    </location>
</feature>
<feature type="site" description="Important for substrate specificity" evidence="1">
    <location>
        <position position="155"/>
    </location>
</feature>
<gene>
    <name type="ordered locus">XAC2771</name>
</gene>
<keyword id="KW-0963">Cytoplasm</keyword>
<keyword id="KW-0378">Hydrolase</keyword>
<keyword id="KW-0546">Nucleotide metabolism</keyword>
<evidence type="ECO:0000255" key="1">
    <source>
        <dbReference type="HAMAP-Rule" id="MF_00528"/>
    </source>
</evidence>
<reference key="1">
    <citation type="journal article" date="2002" name="Nature">
        <title>Comparison of the genomes of two Xanthomonas pathogens with differing host specificities.</title>
        <authorList>
            <person name="da Silva A.C.R."/>
            <person name="Ferro J.A."/>
            <person name="Reinach F.C."/>
            <person name="Farah C.S."/>
            <person name="Furlan L.R."/>
            <person name="Quaggio R.B."/>
            <person name="Monteiro-Vitorello C.B."/>
            <person name="Van Sluys M.A."/>
            <person name="Almeida N.F. Jr."/>
            <person name="Alves L.M.C."/>
            <person name="do Amaral A.M."/>
            <person name="Bertolini M.C."/>
            <person name="Camargo L.E.A."/>
            <person name="Camarotte G."/>
            <person name="Cannavan F."/>
            <person name="Cardozo J."/>
            <person name="Chambergo F."/>
            <person name="Ciapina L.P."/>
            <person name="Cicarelli R.M.B."/>
            <person name="Coutinho L.L."/>
            <person name="Cursino-Santos J.R."/>
            <person name="El-Dorry H."/>
            <person name="Faria J.B."/>
            <person name="Ferreira A.J.S."/>
            <person name="Ferreira R.C.C."/>
            <person name="Ferro M.I.T."/>
            <person name="Formighieri E.F."/>
            <person name="Franco M.C."/>
            <person name="Greggio C.C."/>
            <person name="Gruber A."/>
            <person name="Katsuyama A.M."/>
            <person name="Kishi L.T."/>
            <person name="Leite R.P."/>
            <person name="Lemos E.G.M."/>
            <person name="Lemos M.V.F."/>
            <person name="Locali E.C."/>
            <person name="Machado M.A."/>
            <person name="Madeira A.M.B.N."/>
            <person name="Martinez-Rossi N.M."/>
            <person name="Martins E.C."/>
            <person name="Meidanis J."/>
            <person name="Menck C.F.M."/>
            <person name="Miyaki C.Y."/>
            <person name="Moon D.H."/>
            <person name="Moreira L.M."/>
            <person name="Novo M.T.M."/>
            <person name="Okura V.K."/>
            <person name="Oliveira M.C."/>
            <person name="Oliveira V.R."/>
            <person name="Pereira H.A."/>
            <person name="Rossi A."/>
            <person name="Sena J.A.D."/>
            <person name="Silva C."/>
            <person name="de Souza R.F."/>
            <person name="Spinola L.A.F."/>
            <person name="Takita M.A."/>
            <person name="Tamura R.E."/>
            <person name="Teixeira E.C."/>
            <person name="Tezza R.I.D."/>
            <person name="Trindade dos Santos M."/>
            <person name="Truffi D."/>
            <person name="Tsai S.M."/>
            <person name="White F.F."/>
            <person name="Setubal J.C."/>
            <person name="Kitajima J.P."/>
        </authorList>
    </citation>
    <scope>NUCLEOTIDE SEQUENCE [LARGE SCALE GENOMIC DNA]</scope>
    <source>
        <strain>306</strain>
    </source>
</reference>